<organism>
    <name type="scientific">Cronobacter sakazakii (strain ATCC BAA-894)</name>
    <name type="common">Enterobacter sakazakii</name>
    <dbReference type="NCBI Taxonomy" id="290339"/>
    <lineage>
        <taxon>Bacteria</taxon>
        <taxon>Pseudomonadati</taxon>
        <taxon>Pseudomonadota</taxon>
        <taxon>Gammaproteobacteria</taxon>
        <taxon>Enterobacterales</taxon>
        <taxon>Enterobacteriaceae</taxon>
        <taxon>Cronobacter</taxon>
    </lineage>
</organism>
<reference key="1">
    <citation type="journal article" date="2010" name="PLoS ONE">
        <title>Genome sequence of Cronobacter sakazakii BAA-894 and comparative genomic hybridization analysis with other Cronobacter species.</title>
        <authorList>
            <person name="Kucerova E."/>
            <person name="Clifton S.W."/>
            <person name="Xia X.Q."/>
            <person name="Long F."/>
            <person name="Porwollik S."/>
            <person name="Fulton L."/>
            <person name="Fronick C."/>
            <person name="Minx P."/>
            <person name="Kyung K."/>
            <person name="Warren W."/>
            <person name="Fulton R."/>
            <person name="Feng D."/>
            <person name="Wollam A."/>
            <person name="Shah N."/>
            <person name="Bhonagiri V."/>
            <person name="Nash W.E."/>
            <person name="Hallsworth-Pepin K."/>
            <person name="Wilson R.K."/>
            <person name="McClelland M."/>
            <person name="Forsythe S.J."/>
        </authorList>
    </citation>
    <scope>NUCLEOTIDE SEQUENCE [LARGE SCALE GENOMIC DNA]</scope>
    <source>
        <strain>ATCC BAA-894</strain>
    </source>
</reference>
<accession>A7MJB9</accession>
<name>RL13_CROS8</name>
<keyword id="KW-1185">Reference proteome</keyword>
<keyword id="KW-0687">Ribonucleoprotein</keyword>
<keyword id="KW-0689">Ribosomal protein</keyword>
<proteinExistence type="inferred from homology"/>
<protein>
    <recommendedName>
        <fullName evidence="1">Large ribosomal subunit protein uL13</fullName>
    </recommendedName>
    <alternativeName>
        <fullName evidence="2">50S ribosomal protein L13</fullName>
    </alternativeName>
</protein>
<gene>
    <name evidence="1" type="primary">rplM</name>
    <name type="ordered locus">ESA_03617</name>
</gene>
<sequence length="142" mass="16068">MKTFTAKPETVKRDWYVVDATGKTLGRLATELARRLRGKHKAEYTPHVDTGDYIIVLNAEKVAVTGNKRSDKMYYHHTGHIGGIKEATFEEMIARRPERVIEIAVKGMLPKGPLGRAMYRKLKVYAGNEHNHAAQQPQVLDI</sequence>
<feature type="chain" id="PRO_1000055380" description="Large ribosomal subunit protein uL13">
    <location>
        <begin position="1"/>
        <end position="142"/>
    </location>
</feature>
<comment type="function">
    <text evidence="1">This protein is one of the early assembly proteins of the 50S ribosomal subunit, although it is not seen to bind rRNA by itself. It is important during the early stages of 50S assembly.</text>
</comment>
<comment type="subunit">
    <text evidence="1">Part of the 50S ribosomal subunit.</text>
</comment>
<comment type="similarity">
    <text evidence="1">Belongs to the universal ribosomal protein uL13 family.</text>
</comment>
<evidence type="ECO:0000255" key="1">
    <source>
        <dbReference type="HAMAP-Rule" id="MF_01366"/>
    </source>
</evidence>
<evidence type="ECO:0000305" key="2"/>
<dbReference type="EMBL" id="CP000783">
    <property type="protein sequence ID" value="ABU78827.1"/>
    <property type="molecule type" value="Genomic_DNA"/>
</dbReference>
<dbReference type="RefSeq" id="WP_002437467.1">
    <property type="nucleotide sequence ID" value="NC_009778.1"/>
</dbReference>
<dbReference type="SMR" id="A7MJB9"/>
<dbReference type="GeneID" id="92830192"/>
<dbReference type="KEGG" id="esa:ESA_03617"/>
<dbReference type="HOGENOM" id="CLU_082184_2_2_6"/>
<dbReference type="Proteomes" id="UP000000260">
    <property type="component" value="Chromosome"/>
</dbReference>
<dbReference type="GO" id="GO:0022625">
    <property type="term" value="C:cytosolic large ribosomal subunit"/>
    <property type="evidence" value="ECO:0007669"/>
    <property type="project" value="TreeGrafter"/>
</dbReference>
<dbReference type="GO" id="GO:0003729">
    <property type="term" value="F:mRNA binding"/>
    <property type="evidence" value="ECO:0007669"/>
    <property type="project" value="TreeGrafter"/>
</dbReference>
<dbReference type="GO" id="GO:0003735">
    <property type="term" value="F:structural constituent of ribosome"/>
    <property type="evidence" value="ECO:0007669"/>
    <property type="project" value="InterPro"/>
</dbReference>
<dbReference type="GO" id="GO:0017148">
    <property type="term" value="P:negative regulation of translation"/>
    <property type="evidence" value="ECO:0007669"/>
    <property type="project" value="TreeGrafter"/>
</dbReference>
<dbReference type="GO" id="GO:0006412">
    <property type="term" value="P:translation"/>
    <property type="evidence" value="ECO:0007669"/>
    <property type="project" value="UniProtKB-UniRule"/>
</dbReference>
<dbReference type="CDD" id="cd00392">
    <property type="entry name" value="Ribosomal_L13"/>
    <property type="match status" value="1"/>
</dbReference>
<dbReference type="FunFam" id="3.90.1180.10:FF:000001">
    <property type="entry name" value="50S ribosomal protein L13"/>
    <property type="match status" value="1"/>
</dbReference>
<dbReference type="Gene3D" id="3.90.1180.10">
    <property type="entry name" value="Ribosomal protein L13"/>
    <property type="match status" value="1"/>
</dbReference>
<dbReference type="HAMAP" id="MF_01366">
    <property type="entry name" value="Ribosomal_uL13"/>
    <property type="match status" value="1"/>
</dbReference>
<dbReference type="InterPro" id="IPR005822">
    <property type="entry name" value="Ribosomal_uL13"/>
</dbReference>
<dbReference type="InterPro" id="IPR005823">
    <property type="entry name" value="Ribosomal_uL13_bac-type"/>
</dbReference>
<dbReference type="InterPro" id="IPR023563">
    <property type="entry name" value="Ribosomal_uL13_CS"/>
</dbReference>
<dbReference type="InterPro" id="IPR036899">
    <property type="entry name" value="Ribosomal_uL13_sf"/>
</dbReference>
<dbReference type="NCBIfam" id="TIGR01066">
    <property type="entry name" value="rplM_bact"/>
    <property type="match status" value="1"/>
</dbReference>
<dbReference type="PANTHER" id="PTHR11545:SF2">
    <property type="entry name" value="LARGE RIBOSOMAL SUBUNIT PROTEIN UL13M"/>
    <property type="match status" value="1"/>
</dbReference>
<dbReference type="PANTHER" id="PTHR11545">
    <property type="entry name" value="RIBOSOMAL PROTEIN L13"/>
    <property type="match status" value="1"/>
</dbReference>
<dbReference type="Pfam" id="PF00572">
    <property type="entry name" value="Ribosomal_L13"/>
    <property type="match status" value="1"/>
</dbReference>
<dbReference type="PIRSF" id="PIRSF002181">
    <property type="entry name" value="Ribosomal_L13"/>
    <property type="match status" value="1"/>
</dbReference>
<dbReference type="SUPFAM" id="SSF52161">
    <property type="entry name" value="Ribosomal protein L13"/>
    <property type="match status" value="1"/>
</dbReference>
<dbReference type="PROSITE" id="PS00783">
    <property type="entry name" value="RIBOSOMAL_L13"/>
    <property type="match status" value="1"/>
</dbReference>